<proteinExistence type="inferred from homology"/>
<evidence type="ECO:0000255" key="1">
    <source>
        <dbReference type="HAMAP-Rule" id="MF_00049"/>
    </source>
</evidence>
<gene>
    <name evidence="1" type="primary">leuS</name>
    <name type="ordered locus">LAF_1354</name>
</gene>
<organism>
    <name type="scientific">Limosilactobacillus fermentum (strain NBRC 3956 / LMG 18251)</name>
    <name type="common">Lactobacillus fermentum</name>
    <dbReference type="NCBI Taxonomy" id="334390"/>
    <lineage>
        <taxon>Bacteria</taxon>
        <taxon>Bacillati</taxon>
        <taxon>Bacillota</taxon>
        <taxon>Bacilli</taxon>
        <taxon>Lactobacillales</taxon>
        <taxon>Lactobacillaceae</taxon>
        <taxon>Limosilactobacillus</taxon>
    </lineage>
</organism>
<accession>B2GDF8</accession>
<sequence length="805" mass="92621">MAYDHKAIEKKWQRYWKQHKTFKATLDKDQKKYYALDMFPYPSGQGLHVGHPEGYTATDVMSRLKRMQGFNVLHPMGWDAFGLPAEQYALKTGHNPADFTNQNVDHFRDQIQSLGFSYDWDREVNTTDPNYYKWTQWIFEQLYKKGLAYEDEIMVNWAPDFMGGTVVANEEVVDGKTERGGYPVYRVPMRQWVLKITAYADRLIDDLDLVDWPESVKEMQRNWIGRSEGASVKFKVVGHDGVEIEVFTTRADTLFGASYVVLAPENELVDQLTTPEQKAAVDAYKEEVSRRSDLERTELSKEKTGVFTGAYVINPVNGEQLPIWTADYVLNSYGTGAVMAVPSGDQRDFEFATKFNLPITPVVEGFNGEEAYTEDGAHVNSGFLDGLNIKEAKAKMVEWLEEHDCGGKKVNYRLRDWIFSRQRYWGEPIPVIHWDDGTTSLVPEDELPLRLPETDNIEPSGTGESPLANIEDWVNVYDENGRHGKRETNTMPQWAGSSWYWLRYTDPTNDKEFASKEALDYWSPVDLYVGGAEHAVLHLLYARFWHKVLYDLGLVPTKEPFMKLVNQGMILGSNHEKMSKSKGNVVNPDDIVDQYGADTLRLYEMFMGPLEESVPWDEKGLHGSNKWVQRVWRLLMDDNNHLRDRVSTYNDGKLTKVYNQTVKKVTDDFERMHFNTAISQLMVFVNEAYKVDDLPLEYMKGFVKMIAPLMPHLAEELWSQFNESETITYQPWPTYDEKALVEDEVEMIVQVNGKVRAKIKMAKDADNKDVEDAALANEHVHSFVDGKDVKKVIVIPNRIVNIVVK</sequence>
<keyword id="KW-0030">Aminoacyl-tRNA synthetase</keyword>
<keyword id="KW-0067">ATP-binding</keyword>
<keyword id="KW-0963">Cytoplasm</keyword>
<keyword id="KW-0436">Ligase</keyword>
<keyword id="KW-0547">Nucleotide-binding</keyword>
<keyword id="KW-0648">Protein biosynthesis</keyword>
<keyword id="KW-1185">Reference proteome</keyword>
<comment type="catalytic activity">
    <reaction evidence="1">
        <text>tRNA(Leu) + L-leucine + ATP = L-leucyl-tRNA(Leu) + AMP + diphosphate</text>
        <dbReference type="Rhea" id="RHEA:11688"/>
        <dbReference type="Rhea" id="RHEA-COMP:9613"/>
        <dbReference type="Rhea" id="RHEA-COMP:9622"/>
        <dbReference type="ChEBI" id="CHEBI:30616"/>
        <dbReference type="ChEBI" id="CHEBI:33019"/>
        <dbReference type="ChEBI" id="CHEBI:57427"/>
        <dbReference type="ChEBI" id="CHEBI:78442"/>
        <dbReference type="ChEBI" id="CHEBI:78494"/>
        <dbReference type="ChEBI" id="CHEBI:456215"/>
        <dbReference type="EC" id="6.1.1.4"/>
    </reaction>
</comment>
<comment type="subcellular location">
    <subcellularLocation>
        <location evidence="1">Cytoplasm</location>
    </subcellularLocation>
</comment>
<comment type="similarity">
    <text evidence="1">Belongs to the class-I aminoacyl-tRNA synthetase family.</text>
</comment>
<reference key="1">
    <citation type="journal article" date="2008" name="DNA Res.">
        <title>Comparative genome analysis of Lactobacillus reuteri and Lactobacillus fermentum reveal a genomic island for reuterin and cobalamin production.</title>
        <authorList>
            <person name="Morita H."/>
            <person name="Toh H."/>
            <person name="Fukuda S."/>
            <person name="Horikawa H."/>
            <person name="Oshima K."/>
            <person name="Suzuki T."/>
            <person name="Murakami M."/>
            <person name="Hisamatsu S."/>
            <person name="Kato Y."/>
            <person name="Takizawa T."/>
            <person name="Fukuoka H."/>
            <person name="Yoshimura T."/>
            <person name="Itoh K."/>
            <person name="O'Sullivan D.J."/>
            <person name="McKay L.L."/>
            <person name="Ohno H."/>
            <person name="Kikuchi J."/>
            <person name="Masaoka T."/>
            <person name="Hattori M."/>
        </authorList>
    </citation>
    <scope>NUCLEOTIDE SEQUENCE [LARGE SCALE GENOMIC DNA]</scope>
    <source>
        <strain>NBRC 3956 / LMG 18251</strain>
    </source>
</reference>
<protein>
    <recommendedName>
        <fullName evidence="1">Leucine--tRNA ligase</fullName>
        <ecNumber evidence="1">6.1.1.4</ecNumber>
    </recommendedName>
    <alternativeName>
        <fullName evidence="1">Leucyl-tRNA synthetase</fullName>
        <shortName evidence="1">LeuRS</shortName>
    </alternativeName>
</protein>
<name>SYL_LIMF3</name>
<feature type="chain" id="PRO_1000091326" description="Leucine--tRNA ligase">
    <location>
        <begin position="1"/>
        <end position="805"/>
    </location>
</feature>
<feature type="short sequence motif" description="'HIGH' region">
    <location>
        <begin position="40"/>
        <end position="51"/>
    </location>
</feature>
<feature type="short sequence motif" description="'KMSKS' region">
    <location>
        <begin position="577"/>
        <end position="581"/>
    </location>
</feature>
<feature type="binding site" evidence="1">
    <location>
        <position position="580"/>
    </location>
    <ligand>
        <name>ATP</name>
        <dbReference type="ChEBI" id="CHEBI:30616"/>
    </ligand>
</feature>
<dbReference type="EC" id="6.1.1.4" evidence="1"/>
<dbReference type="EMBL" id="AP008937">
    <property type="protein sequence ID" value="BAG27690.1"/>
    <property type="molecule type" value="Genomic_DNA"/>
</dbReference>
<dbReference type="RefSeq" id="WP_012391498.1">
    <property type="nucleotide sequence ID" value="NC_010610.1"/>
</dbReference>
<dbReference type="SMR" id="B2GDF8"/>
<dbReference type="KEGG" id="lfe:LAF_1354"/>
<dbReference type="eggNOG" id="COG0495">
    <property type="taxonomic scope" value="Bacteria"/>
</dbReference>
<dbReference type="HOGENOM" id="CLU_004427_0_0_9"/>
<dbReference type="Proteomes" id="UP000001697">
    <property type="component" value="Chromosome"/>
</dbReference>
<dbReference type="GO" id="GO:0005829">
    <property type="term" value="C:cytosol"/>
    <property type="evidence" value="ECO:0007669"/>
    <property type="project" value="TreeGrafter"/>
</dbReference>
<dbReference type="GO" id="GO:0002161">
    <property type="term" value="F:aminoacyl-tRNA deacylase activity"/>
    <property type="evidence" value="ECO:0007669"/>
    <property type="project" value="InterPro"/>
</dbReference>
<dbReference type="GO" id="GO:0005524">
    <property type="term" value="F:ATP binding"/>
    <property type="evidence" value="ECO:0007669"/>
    <property type="project" value="UniProtKB-UniRule"/>
</dbReference>
<dbReference type="GO" id="GO:0004823">
    <property type="term" value="F:leucine-tRNA ligase activity"/>
    <property type="evidence" value="ECO:0007669"/>
    <property type="project" value="UniProtKB-UniRule"/>
</dbReference>
<dbReference type="GO" id="GO:0006429">
    <property type="term" value="P:leucyl-tRNA aminoacylation"/>
    <property type="evidence" value="ECO:0007669"/>
    <property type="project" value="UniProtKB-UniRule"/>
</dbReference>
<dbReference type="CDD" id="cd07958">
    <property type="entry name" value="Anticodon_Ia_Leu_BEm"/>
    <property type="match status" value="1"/>
</dbReference>
<dbReference type="CDD" id="cd00812">
    <property type="entry name" value="LeuRS_core"/>
    <property type="match status" value="1"/>
</dbReference>
<dbReference type="FunFam" id="3.10.20.590:FF:000001">
    <property type="entry name" value="Leucine--tRNA ligase"/>
    <property type="match status" value="1"/>
</dbReference>
<dbReference type="FunFam" id="3.40.50.620:FF:000056">
    <property type="entry name" value="Leucine--tRNA ligase"/>
    <property type="match status" value="1"/>
</dbReference>
<dbReference type="FunFam" id="3.40.50.620:FF:000077">
    <property type="entry name" value="Leucine--tRNA ligase"/>
    <property type="match status" value="1"/>
</dbReference>
<dbReference type="FunFam" id="1.10.730.10:FF:000011">
    <property type="entry name" value="Leucine--tRNA ligase chloroplastic/mitochondrial"/>
    <property type="match status" value="1"/>
</dbReference>
<dbReference type="Gene3D" id="3.10.20.590">
    <property type="match status" value="1"/>
</dbReference>
<dbReference type="Gene3D" id="3.40.50.620">
    <property type="entry name" value="HUPs"/>
    <property type="match status" value="2"/>
</dbReference>
<dbReference type="Gene3D" id="1.10.730.10">
    <property type="entry name" value="Isoleucyl-tRNA Synthetase, Domain 1"/>
    <property type="match status" value="1"/>
</dbReference>
<dbReference type="HAMAP" id="MF_00049_B">
    <property type="entry name" value="Leu_tRNA_synth_B"/>
    <property type="match status" value="1"/>
</dbReference>
<dbReference type="InterPro" id="IPR001412">
    <property type="entry name" value="aa-tRNA-synth_I_CS"/>
</dbReference>
<dbReference type="InterPro" id="IPR002300">
    <property type="entry name" value="aa-tRNA-synth_Ia"/>
</dbReference>
<dbReference type="InterPro" id="IPR002302">
    <property type="entry name" value="Leu-tRNA-ligase"/>
</dbReference>
<dbReference type="InterPro" id="IPR025709">
    <property type="entry name" value="Leu_tRNA-synth_edit"/>
</dbReference>
<dbReference type="InterPro" id="IPR013155">
    <property type="entry name" value="M/V/L/I-tRNA-synth_anticd-bd"/>
</dbReference>
<dbReference type="InterPro" id="IPR015413">
    <property type="entry name" value="Methionyl/Leucyl_tRNA_Synth"/>
</dbReference>
<dbReference type="InterPro" id="IPR014729">
    <property type="entry name" value="Rossmann-like_a/b/a_fold"/>
</dbReference>
<dbReference type="InterPro" id="IPR009080">
    <property type="entry name" value="tRNAsynth_Ia_anticodon-bd"/>
</dbReference>
<dbReference type="InterPro" id="IPR009008">
    <property type="entry name" value="Val/Leu/Ile-tRNA-synth_edit"/>
</dbReference>
<dbReference type="NCBIfam" id="TIGR00396">
    <property type="entry name" value="leuS_bact"/>
    <property type="match status" value="1"/>
</dbReference>
<dbReference type="PANTHER" id="PTHR43740:SF2">
    <property type="entry name" value="LEUCINE--TRNA LIGASE, MITOCHONDRIAL"/>
    <property type="match status" value="1"/>
</dbReference>
<dbReference type="PANTHER" id="PTHR43740">
    <property type="entry name" value="LEUCYL-TRNA SYNTHETASE"/>
    <property type="match status" value="1"/>
</dbReference>
<dbReference type="Pfam" id="PF08264">
    <property type="entry name" value="Anticodon_1"/>
    <property type="match status" value="1"/>
</dbReference>
<dbReference type="Pfam" id="PF00133">
    <property type="entry name" value="tRNA-synt_1"/>
    <property type="match status" value="1"/>
</dbReference>
<dbReference type="Pfam" id="PF13603">
    <property type="entry name" value="tRNA-synt_1_2"/>
    <property type="match status" value="1"/>
</dbReference>
<dbReference type="Pfam" id="PF09334">
    <property type="entry name" value="tRNA-synt_1g"/>
    <property type="match status" value="1"/>
</dbReference>
<dbReference type="PRINTS" id="PR00985">
    <property type="entry name" value="TRNASYNTHLEU"/>
</dbReference>
<dbReference type="SUPFAM" id="SSF47323">
    <property type="entry name" value="Anticodon-binding domain of a subclass of class I aminoacyl-tRNA synthetases"/>
    <property type="match status" value="1"/>
</dbReference>
<dbReference type="SUPFAM" id="SSF52374">
    <property type="entry name" value="Nucleotidylyl transferase"/>
    <property type="match status" value="1"/>
</dbReference>
<dbReference type="SUPFAM" id="SSF50677">
    <property type="entry name" value="ValRS/IleRS/LeuRS editing domain"/>
    <property type="match status" value="1"/>
</dbReference>
<dbReference type="PROSITE" id="PS00178">
    <property type="entry name" value="AA_TRNA_LIGASE_I"/>
    <property type="match status" value="1"/>
</dbReference>